<protein>
    <recommendedName>
        <fullName evidence="1">Alanine--tRNA ligase</fullName>
        <ecNumber evidence="1">6.1.1.7</ecNumber>
    </recommendedName>
    <alternativeName>
        <fullName evidence="1">Alanyl-tRNA synthetase</fullName>
        <shortName evidence="1">AlaRS</shortName>
    </alternativeName>
</protein>
<accession>Q13W97</accession>
<evidence type="ECO:0000255" key="1">
    <source>
        <dbReference type="HAMAP-Rule" id="MF_00036"/>
    </source>
</evidence>
<reference key="1">
    <citation type="journal article" date="2006" name="Proc. Natl. Acad. Sci. U.S.A.">
        <title>Burkholderia xenovorans LB400 harbors a multi-replicon, 9.73-Mbp genome shaped for versatility.</title>
        <authorList>
            <person name="Chain P.S.G."/>
            <person name="Denef V.J."/>
            <person name="Konstantinidis K.T."/>
            <person name="Vergez L.M."/>
            <person name="Agullo L."/>
            <person name="Reyes V.L."/>
            <person name="Hauser L."/>
            <person name="Cordova M."/>
            <person name="Gomez L."/>
            <person name="Gonzalez M."/>
            <person name="Land M."/>
            <person name="Lao V."/>
            <person name="Larimer F."/>
            <person name="LiPuma J.J."/>
            <person name="Mahenthiralingam E."/>
            <person name="Malfatti S.A."/>
            <person name="Marx C.J."/>
            <person name="Parnell J.J."/>
            <person name="Ramette A."/>
            <person name="Richardson P."/>
            <person name="Seeger M."/>
            <person name="Smith D."/>
            <person name="Spilker T."/>
            <person name="Sul W.J."/>
            <person name="Tsoi T.V."/>
            <person name="Ulrich L.E."/>
            <person name="Zhulin I.B."/>
            <person name="Tiedje J.M."/>
        </authorList>
    </citation>
    <scope>NUCLEOTIDE SEQUENCE [LARGE SCALE GENOMIC DNA]</scope>
    <source>
        <strain>LB400</strain>
    </source>
</reference>
<proteinExistence type="inferred from homology"/>
<comment type="function">
    <text evidence="1">Catalyzes the attachment of alanine to tRNA(Ala) in a two-step reaction: alanine is first activated by ATP to form Ala-AMP and then transferred to the acceptor end of tRNA(Ala). Also edits incorrectly charged Ser-tRNA(Ala) and Gly-tRNA(Ala) via its editing domain.</text>
</comment>
<comment type="catalytic activity">
    <reaction evidence="1">
        <text>tRNA(Ala) + L-alanine + ATP = L-alanyl-tRNA(Ala) + AMP + diphosphate</text>
        <dbReference type="Rhea" id="RHEA:12540"/>
        <dbReference type="Rhea" id="RHEA-COMP:9657"/>
        <dbReference type="Rhea" id="RHEA-COMP:9923"/>
        <dbReference type="ChEBI" id="CHEBI:30616"/>
        <dbReference type="ChEBI" id="CHEBI:33019"/>
        <dbReference type="ChEBI" id="CHEBI:57972"/>
        <dbReference type="ChEBI" id="CHEBI:78442"/>
        <dbReference type="ChEBI" id="CHEBI:78497"/>
        <dbReference type="ChEBI" id="CHEBI:456215"/>
        <dbReference type="EC" id="6.1.1.7"/>
    </reaction>
</comment>
<comment type="cofactor">
    <cofactor evidence="1">
        <name>Zn(2+)</name>
        <dbReference type="ChEBI" id="CHEBI:29105"/>
    </cofactor>
    <text evidence="1">Binds 1 zinc ion per subunit.</text>
</comment>
<comment type="subcellular location">
    <subcellularLocation>
        <location evidence="1">Cytoplasm</location>
    </subcellularLocation>
</comment>
<comment type="domain">
    <text evidence="1">Consists of three domains; the N-terminal catalytic domain, the editing domain and the C-terminal C-Ala domain. The editing domain removes incorrectly charged amino acids, while the C-Ala domain, along with tRNA(Ala), serves as a bridge to cooperatively bring together the editing and aminoacylation centers thus stimulating deacylation of misacylated tRNAs.</text>
</comment>
<comment type="similarity">
    <text evidence="1">Belongs to the class-II aminoacyl-tRNA synthetase family.</text>
</comment>
<feature type="chain" id="PRO_0000347536" description="Alanine--tRNA ligase">
    <location>
        <begin position="1"/>
        <end position="874"/>
    </location>
</feature>
<feature type="binding site" evidence="1">
    <location>
        <position position="564"/>
    </location>
    <ligand>
        <name>Zn(2+)</name>
        <dbReference type="ChEBI" id="CHEBI:29105"/>
    </ligand>
</feature>
<feature type="binding site" evidence="1">
    <location>
        <position position="568"/>
    </location>
    <ligand>
        <name>Zn(2+)</name>
        <dbReference type="ChEBI" id="CHEBI:29105"/>
    </ligand>
</feature>
<feature type="binding site" evidence="1">
    <location>
        <position position="665"/>
    </location>
    <ligand>
        <name>Zn(2+)</name>
        <dbReference type="ChEBI" id="CHEBI:29105"/>
    </ligand>
</feature>
<feature type="binding site" evidence="1">
    <location>
        <position position="669"/>
    </location>
    <ligand>
        <name>Zn(2+)</name>
        <dbReference type="ChEBI" id="CHEBI:29105"/>
    </ligand>
</feature>
<dbReference type="EC" id="6.1.1.7" evidence="1"/>
<dbReference type="EMBL" id="CP000270">
    <property type="protein sequence ID" value="ABE31642.1"/>
    <property type="molecule type" value="Genomic_DNA"/>
</dbReference>
<dbReference type="RefSeq" id="WP_011489205.1">
    <property type="nucleotide sequence ID" value="NC_007951.1"/>
</dbReference>
<dbReference type="SMR" id="Q13W97"/>
<dbReference type="STRING" id="266265.Bxe_A1311"/>
<dbReference type="KEGG" id="bxb:DR64_3472"/>
<dbReference type="KEGG" id="bxe:Bxe_A1311"/>
<dbReference type="PATRIC" id="fig|266265.5.peg.3262"/>
<dbReference type="eggNOG" id="COG0013">
    <property type="taxonomic scope" value="Bacteria"/>
</dbReference>
<dbReference type="OrthoDB" id="9803884at2"/>
<dbReference type="Proteomes" id="UP000001817">
    <property type="component" value="Chromosome 1"/>
</dbReference>
<dbReference type="GO" id="GO:0005829">
    <property type="term" value="C:cytosol"/>
    <property type="evidence" value="ECO:0007669"/>
    <property type="project" value="TreeGrafter"/>
</dbReference>
<dbReference type="GO" id="GO:0004813">
    <property type="term" value="F:alanine-tRNA ligase activity"/>
    <property type="evidence" value="ECO:0007669"/>
    <property type="project" value="UniProtKB-UniRule"/>
</dbReference>
<dbReference type="GO" id="GO:0002161">
    <property type="term" value="F:aminoacyl-tRNA deacylase activity"/>
    <property type="evidence" value="ECO:0007669"/>
    <property type="project" value="TreeGrafter"/>
</dbReference>
<dbReference type="GO" id="GO:0005524">
    <property type="term" value="F:ATP binding"/>
    <property type="evidence" value="ECO:0007669"/>
    <property type="project" value="UniProtKB-UniRule"/>
</dbReference>
<dbReference type="GO" id="GO:0000049">
    <property type="term" value="F:tRNA binding"/>
    <property type="evidence" value="ECO:0007669"/>
    <property type="project" value="UniProtKB-KW"/>
</dbReference>
<dbReference type="GO" id="GO:0008270">
    <property type="term" value="F:zinc ion binding"/>
    <property type="evidence" value="ECO:0007669"/>
    <property type="project" value="UniProtKB-UniRule"/>
</dbReference>
<dbReference type="GO" id="GO:0006419">
    <property type="term" value="P:alanyl-tRNA aminoacylation"/>
    <property type="evidence" value="ECO:0007669"/>
    <property type="project" value="UniProtKB-UniRule"/>
</dbReference>
<dbReference type="GO" id="GO:0045892">
    <property type="term" value="P:negative regulation of DNA-templated transcription"/>
    <property type="evidence" value="ECO:0007669"/>
    <property type="project" value="TreeGrafter"/>
</dbReference>
<dbReference type="CDD" id="cd00673">
    <property type="entry name" value="AlaRS_core"/>
    <property type="match status" value="1"/>
</dbReference>
<dbReference type="FunFam" id="2.40.30.130:FF:000001">
    <property type="entry name" value="Alanine--tRNA ligase"/>
    <property type="match status" value="1"/>
</dbReference>
<dbReference type="FunFam" id="3.10.310.40:FF:000001">
    <property type="entry name" value="Alanine--tRNA ligase"/>
    <property type="match status" value="1"/>
</dbReference>
<dbReference type="FunFam" id="3.30.54.20:FF:000001">
    <property type="entry name" value="Alanine--tRNA ligase"/>
    <property type="match status" value="1"/>
</dbReference>
<dbReference type="FunFam" id="3.30.930.10:FF:000004">
    <property type="entry name" value="Alanine--tRNA ligase"/>
    <property type="match status" value="1"/>
</dbReference>
<dbReference type="FunFam" id="3.30.980.10:FF:000004">
    <property type="entry name" value="Alanine--tRNA ligase, cytoplasmic"/>
    <property type="match status" value="1"/>
</dbReference>
<dbReference type="Gene3D" id="2.40.30.130">
    <property type="match status" value="1"/>
</dbReference>
<dbReference type="Gene3D" id="3.10.310.40">
    <property type="match status" value="1"/>
</dbReference>
<dbReference type="Gene3D" id="3.30.54.20">
    <property type="match status" value="1"/>
</dbReference>
<dbReference type="Gene3D" id="6.10.250.550">
    <property type="match status" value="1"/>
</dbReference>
<dbReference type="Gene3D" id="3.30.930.10">
    <property type="entry name" value="Bira Bifunctional Protein, Domain 2"/>
    <property type="match status" value="1"/>
</dbReference>
<dbReference type="Gene3D" id="3.30.980.10">
    <property type="entry name" value="Threonyl-trna Synthetase, Chain A, domain 2"/>
    <property type="match status" value="1"/>
</dbReference>
<dbReference type="HAMAP" id="MF_00036_B">
    <property type="entry name" value="Ala_tRNA_synth_B"/>
    <property type="match status" value="1"/>
</dbReference>
<dbReference type="InterPro" id="IPR045864">
    <property type="entry name" value="aa-tRNA-synth_II/BPL/LPL"/>
</dbReference>
<dbReference type="InterPro" id="IPR002318">
    <property type="entry name" value="Ala-tRNA-lgiase_IIc"/>
</dbReference>
<dbReference type="InterPro" id="IPR018162">
    <property type="entry name" value="Ala-tRNA-ligase_IIc_anticod-bd"/>
</dbReference>
<dbReference type="InterPro" id="IPR018165">
    <property type="entry name" value="Ala-tRNA-synth_IIc_core"/>
</dbReference>
<dbReference type="InterPro" id="IPR018164">
    <property type="entry name" value="Ala-tRNA-synth_IIc_N"/>
</dbReference>
<dbReference type="InterPro" id="IPR050058">
    <property type="entry name" value="Ala-tRNA_ligase"/>
</dbReference>
<dbReference type="InterPro" id="IPR023033">
    <property type="entry name" value="Ala_tRNA_ligase_euk/bac"/>
</dbReference>
<dbReference type="InterPro" id="IPR003156">
    <property type="entry name" value="DHHA1_dom"/>
</dbReference>
<dbReference type="InterPro" id="IPR018163">
    <property type="entry name" value="Thr/Ala-tRNA-synth_IIc_edit"/>
</dbReference>
<dbReference type="InterPro" id="IPR009000">
    <property type="entry name" value="Transl_B-barrel_sf"/>
</dbReference>
<dbReference type="InterPro" id="IPR012947">
    <property type="entry name" value="tRNA_SAD"/>
</dbReference>
<dbReference type="NCBIfam" id="TIGR00344">
    <property type="entry name" value="alaS"/>
    <property type="match status" value="1"/>
</dbReference>
<dbReference type="PANTHER" id="PTHR11777:SF9">
    <property type="entry name" value="ALANINE--TRNA LIGASE, CYTOPLASMIC"/>
    <property type="match status" value="1"/>
</dbReference>
<dbReference type="PANTHER" id="PTHR11777">
    <property type="entry name" value="ALANYL-TRNA SYNTHETASE"/>
    <property type="match status" value="1"/>
</dbReference>
<dbReference type="Pfam" id="PF02272">
    <property type="entry name" value="DHHA1"/>
    <property type="match status" value="1"/>
</dbReference>
<dbReference type="Pfam" id="PF01411">
    <property type="entry name" value="tRNA-synt_2c"/>
    <property type="match status" value="1"/>
</dbReference>
<dbReference type="Pfam" id="PF07973">
    <property type="entry name" value="tRNA_SAD"/>
    <property type="match status" value="1"/>
</dbReference>
<dbReference type="PRINTS" id="PR00980">
    <property type="entry name" value="TRNASYNTHALA"/>
</dbReference>
<dbReference type="SMART" id="SM00863">
    <property type="entry name" value="tRNA_SAD"/>
    <property type="match status" value="1"/>
</dbReference>
<dbReference type="SUPFAM" id="SSF55681">
    <property type="entry name" value="Class II aaRS and biotin synthetases"/>
    <property type="match status" value="1"/>
</dbReference>
<dbReference type="SUPFAM" id="SSF101353">
    <property type="entry name" value="Putative anticodon-binding domain of alanyl-tRNA synthetase (AlaRS)"/>
    <property type="match status" value="1"/>
</dbReference>
<dbReference type="SUPFAM" id="SSF55186">
    <property type="entry name" value="ThrRS/AlaRS common domain"/>
    <property type="match status" value="1"/>
</dbReference>
<dbReference type="SUPFAM" id="SSF50447">
    <property type="entry name" value="Translation proteins"/>
    <property type="match status" value="1"/>
</dbReference>
<dbReference type="PROSITE" id="PS50860">
    <property type="entry name" value="AA_TRNA_LIGASE_II_ALA"/>
    <property type="match status" value="1"/>
</dbReference>
<organism>
    <name type="scientific">Paraburkholderia xenovorans (strain LB400)</name>
    <dbReference type="NCBI Taxonomy" id="266265"/>
    <lineage>
        <taxon>Bacteria</taxon>
        <taxon>Pseudomonadati</taxon>
        <taxon>Pseudomonadota</taxon>
        <taxon>Betaproteobacteria</taxon>
        <taxon>Burkholderiales</taxon>
        <taxon>Burkholderiaceae</taxon>
        <taxon>Paraburkholderia</taxon>
    </lineage>
</organism>
<sequence>MKAAEIREKFLKFFESKGHTIVRSSSLVPGNDPTLLFTNSGMVQFKDVFLGAESRPYSRATTAQRSVRAGGKHNDLENVGYTARHHTFFEMLGNFSFGDYFKRDAIHYAWELLTGVYQLPKDKLWVTVYHEDDEAHDIWAKEVGVPVERIIRIGDNKGARYASDNFWQMADTGPCGPCSEIFYDHGPDVWGGPPGSPEEDGDRYIEIWNLVFMQFNRDAQGNMTPLPKQCVDTGMGLERIAAVLQHVHSNYEIDLFQALIKAAARETGVSDLTNNSLKVIADHIRACSFLIVDGVIPGNEGRGYVLRRIVRRAIRHGYKLGKKGSFFHRMVADLVAQMGAAYPELKEAEQRVTDVLRQEEERFFETIEHGMSILEGALAELEAGSSKTLDGELAFKLHDTYGFPLDLTADVCREREVTVDEAAFDEAMTRQREQARAAGKFKMAQGLEYSGEKTTFHGYDEVVFDDAKVIALYVEGASVQQASQGQQAVVVLDHTPFYAESGGQVGDQGVLANASVRFAVSDTLKVQADVVGHHGTLEQGTLKVGDVVKAEIDAVRRARTARNHSATHLMHKALREVLGTHVQQKGSLVDADKTRFDFAHNAPLTDEQIRRVEEIVNAEVLANAPGIVRVMSFDEAVKGGAMALFGEKYGDEVRVLDLGFSRELCGGTHVHRTGDIGLFKIVMEGGVAAGIRRVEAITGDNAVRFVQDLDARINAAAAVLKAQPSELTQRIVQVQDQVKSLEKELSALKSKMASSQGDELAGQAIEVGGVHVLAATLEGADVKTLRETVDKLKDKLKSAAIVLASVEGGKVSLIAGVTADASRKVKAGELVNFVAQQVGGKGGGRPDMAQAGGTEPANLPAALAGVKGWVESQL</sequence>
<name>SYA_PARXL</name>
<keyword id="KW-0030">Aminoacyl-tRNA synthetase</keyword>
<keyword id="KW-0067">ATP-binding</keyword>
<keyword id="KW-0963">Cytoplasm</keyword>
<keyword id="KW-0436">Ligase</keyword>
<keyword id="KW-0479">Metal-binding</keyword>
<keyword id="KW-0547">Nucleotide-binding</keyword>
<keyword id="KW-0648">Protein biosynthesis</keyword>
<keyword id="KW-1185">Reference proteome</keyword>
<keyword id="KW-0694">RNA-binding</keyword>
<keyword id="KW-0820">tRNA-binding</keyword>
<keyword id="KW-0862">Zinc</keyword>
<gene>
    <name evidence="1" type="primary">alaS</name>
    <name type="ordered locus">Bxeno_A3104</name>
    <name type="ORF">Bxe_A1311</name>
</gene>